<feature type="chain" id="PRO_0000228157" description="Pre-rRNA-processing protein ESF1">
    <location>
        <begin position="1"/>
        <end position="619"/>
    </location>
</feature>
<feature type="region of interest" description="Disordered" evidence="3">
    <location>
        <begin position="1"/>
        <end position="32"/>
    </location>
</feature>
<feature type="region of interest" description="Disordered" evidence="3">
    <location>
        <begin position="53"/>
        <end position="151"/>
    </location>
</feature>
<feature type="region of interest" description="Disordered" evidence="3">
    <location>
        <begin position="196"/>
        <end position="228"/>
    </location>
</feature>
<feature type="region of interest" description="Disordered" evidence="3">
    <location>
        <begin position="395"/>
        <end position="543"/>
    </location>
</feature>
<feature type="region of interest" description="Disordered" evidence="3">
    <location>
        <begin position="555"/>
        <end position="619"/>
    </location>
</feature>
<feature type="coiled-coil region" evidence="2">
    <location>
        <begin position="418"/>
        <end position="476"/>
    </location>
</feature>
<feature type="compositionally biased region" description="Basic and acidic residues" evidence="3">
    <location>
        <begin position="8"/>
        <end position="26"/>
    </location>
</feature>
<feature type="compositionally biased region" description="Basic and acidic residues" evidence="3">
    <location>
        <begin position="67"/>
        <end position="82"/>
    </location>
</feature>
<feature type="compositionally biased region" description="Basic and acidic residues" evidence="3">
    <location>
        <begin position="92"/>
        <end position="106"/>
    </location>
</feature>
<feature type="compositionally biased region" description="Acidic residues" evidence="3">
    <location>
        <begin position="114"/>
        <end position="143"/>
    </location>
</feature>
<feature type="compositionally biased region" description="Basic and acidic residues" evidence="3">
    <location>
        <begin position="196"/>
        <end position="212"/>
    </location>
</feature>
<feature type="compositionally biased region" description="Basic residues" evidence="3">
    <location>
        <begin position="438"/>
        <end position="447"/>
    </location>
</feature>
<feature type="compositionally biased region" description="Basic and acidic residues" evidence="3">
    <location>
        <begin position="448"/>
        <end position="461"/>
    </location>
</feature>
<feature type="compositionally biased region" description="Basic and acidic residues" evidence="3">
    <location>
        <begin position="469"/>
        <end position="486"/>
    </location>
</feature>
<feature type="compositionally biased region" description="Polar residues" evidence="3">
    <location>
        <begin position="497"/>
        <end position="506"/>
    </location>
</feature>
<feature type="compositionally biased region" description="Basic and acidic residues" evidence="3">
    <location>
        <begin position="525"/>
        <end position="543"/>
    </location>
</feature>
<feature type="compositionally biased region" description="Basic residues" evidence="3">
    <location>
        <begin position="575"/>
        <end position="587"/>
    </location>
</feature>
<feature type="compositionally biased region" description="Basic residues" evidence="3">
    <location>
        <begin position="609"/>
        <end position="619"/>
    </location>
</feature>
<keyword id="KW-0175">Coiled coil</keyword>
<keyword id="KW-0539">Nucleus</keyword>
<keyword id="KW-1185">Reference proteome</keyword>
<keyword id="KW-0690">Ribosome biogenesis</keyword>
<keyword id="KW-0694">RNA-binding</keyword>
<keyword id="KW-0698">rRNA processing</keyword>
<name>ESF1_EREGS</name>
<reference key="1">
    <citation type="journal article" date="2004" name="Science">
        <title>The Ashbya gossypii genome as a tool for mapping the ancient Saccharomyces cerevisiae genome.</title>
        <authorList>
            <person name="Dietrich F.S."/>
            <person name="Voegeli S."/>
            <person name="Brachat S."/>
            <person name="Lerch A."/>
            <person name="Gates K."/>
            <person name="Steiner S."/>
            <person name="Mohr C."/>
            <person name="Poehlmann R."/>
            <person name="Luedi P."/>
            <person name="Choi S."/>
            <person name="Wing R.A."/>
            <person name="Flavier A."/>
            <person name="Gaffney T.D."/>
            <person name="Philippsen P."/>
        </authorList>
    </citation>
    <scope>NUCLEOTIDE SEQUENCE [LARGE SCALE GENOMIC DNA]</scope>
    <source>
        <strain>ATCC 10895 / CBS 109.51 / FGSC 9923 / NRRL Y-1056</strain>
    </source>
</reference>
<reference key="2">
    <citation type="journal article" date="2013" name="G3 (Bethesda)">
        <title>Genomes of Ashbya fungi isolated from insects reveal four mating-type loci, numerous translocations, lack of transposons, and distinct gene duplications.</title>
        <authorList>
            <person name="Dietrich F.S."/>
            <person name="Voegeli S."/>
            <person name="Kuo S."/>
            <person name="Philippsen P."/>
        </authorList>
    </citation>
    <scope>GENOME REANNOTATION</scope>
    <scope>SEQUENCE REVISION TO 327</scope>
    <source>
        <strain>ATCC 10895 / CBS 109.51 / FGSC 9923 / NRRL Y-1056</strain>
    </source>
</reference>
<accession>Q756J5</accession>
<evidence type="ECO:0000250" key="1"/>
<evidence type="ECO:0000255" key="2"/>
<evidence type="ECO:0000256" key="3">
    <source>
        <dbReference type="SAM" id="MobiDB-lite"/>
    </source>
</evidence>
<evidence type="ECO:0000305" key="4"/>
<dbReference type="EMBL" id="AE016818">
    <property type="protein sequence ID" value="AAS52940.2"/>
    <property type="molecule type" value="Genomic_DNA"/>
</dbReference>
<dbReference type="RefSeq" id="NP_985116.2">
    <property type="nucleotide sequence ID" value="NM_210470.2"/>
</dbReference>
<dbReference type="FunCoup" id="Q756J5">
    <property type="interactions" value="1212"/>
</dbReference>
<dbReference type="STRING" id="284811.Q756J5"/>
<dbReference type="EnsemblFungi" id="AAS52940">
    <property type="protein sequence ID" value="AAS52940"/>
    <property type="gene ID" value="AGOS_AER259W"/>
</dbReference>
<dbReference type="GeneID" id="4621326"/>
<dbReference type="KEGG" id="ago:AGOS_AER259W"/>
<dbReference type="eggNOG" id="KOG2318">
    <property type="taxonomic scope" value="Eukaryota"/>
</dbReference>
<dbReference type="HOGENOM" id="CLU_010564_0_1_1"/>
<dbReference type="InParanoid" id="Q756J5"/>
<dbReference type="OMA" id="DHDFAID"/>
<dbReference type="OrthoDB" id="431825at2759"/>
<dbReference type="Proteomes" id="UP000000591">
    <property type="component" value="Chromosome V"/>
</dbReference>
<dbReference type="GO" id="GO:0005730">
    <property type="term" value="C:nucleolus"/>
    <property type="evidence" value="ECO:0007669"/>
    <property type="project" value="UniProtKB-SubCell"/>
</dbReference>
<dbReference type="GO" id="GO:0032040">
    <property type="term" value="C:small-subunit processome"/>
    <property type="evidence" value="ECO:0007669"/>
    <property type="project" value="EnsemblFungi"/>
</dbReference>
<dbReference type="GO" id="GO:0003723">
    <property type="term" value="F:RNA binding"/>
    <property type="evidence" value="ECO:0000318"/>
    <property type="project" value="GO_Central"/>
</dbReference>
<dbReference type="GO" id="GO:0006364">
    <property type="term" value="P:rRNA processing"/>
    <property type="evidence" value="ECO:0000318"/>
    <property type="project" value="GO_Central"/>
</dbReference>
<dbReference type="InterPro" id="IPR039754">
    <property type="entry name" value="Esf1"/>
</dbReference>
<dbReference type="InterPro" id="IPR012580">
    <property type="entry name" value="NUC153"/>
</dbReference>
<dbReference type="InterPro" id="IPR056750">
    <property type="entry name" value="RRM_ESF1"/>
</dbReference>
<dbReference type="PANTHER" id="PTHR12202">
    <property type="entry name" value="ESF1 HOMOLOG"/>
    <property type="match status" value="1"/>
</dbReference>
<dbReference type="PANTHER" id="PTHR12202:SF0">
    <property type="entry name" value="ESF1 HOMOLOG"/>
    <property type="match status" value="1"/>
</dbReference>
<dbReference type="Pfam" id="PF08159">
    <property type="entry name" value="NUC153"/>
    <property type="match status" value="1"/>
</dbReference>
<dbReference type="Pfam" id="PF25121">
    <property type="entry name" value="RRM_ESF1"/>
    <property type="match status" value="1"/>
</dbReference>
<sequence length="619" mass="70969">MAKNNEGTGKDSIDKRFARIESDPKFRAPKQKNLKIKLDDRFSKQDLEYKRKAKVDKYGRRIGTAPGKEEKDFEKYFTKESSESAAEESDKEDSSVAKLDRARGEVPADYVSSSDEESSSESEADSDDATAESDEEVEIEEEKPESGDPSKVLAVVNLDWDHVKCADLLVAFNSFVPEGGKIERVAIYPSEFGKERMQREEVEGPPREVFKSKKDKKAKQDDDDEIGLKDLYEQGDAEKDYDSKALRRYQLERLRYYYAVVYCNNVATAEAIYQNCDGTEYESTANMFDLRYVPEGVTFDDEPREECASVPKDYKPVQFSTSALQHSQVKLTWDETPADRVEMAKRAFSQKEIEDMDFKAYLASDSEESEADDNSEAKNKLRSLVSSVKVADKPLFADESDEEEADVQITFTPGLEGGEAKEEDAEEENILEKLKRKEKERRKKRKERVKELKKQAEEEKKSSKKEKHASKSESEQKSENDKRAELELLMMEDDENSQSINSSAHFNMNDILRSEKERGKKSKYQKKDKIVEDDFKPDLNDPRFKEVFEDRDFAIDPSQPEFKETAAMKQILQERRKRSSKSASKKRKTDEQSDSAMDSAGDLKGLVAKLKRKGKKPKL</sequence>
<comment type="function">
    <text evidence="1">Involved in the 18S rRNA synthesis. Required for the early cleavages at sites A0, A1 and A2 (By similarity).</text>
</comment>
<comment type="subcellular location">
    <subcellularLocation>
        <location evidence="1">Nucleus</location>
        <location evidence="1">Nucleolus</location>
    </subcellularLocation>
</comment>
<comment type="similarity">
    <text evidence="4">Belongs to the ESF1 family.</text>
</comment>
<organism>
    <name type="scientific">Eremothecium gossypii (strain ATCC 10895 / CBS 109.51 / FGSC 9923 / NRRL Y-1056)</name>
    <name type="common">Yeast</name>
    <name type="synonym">Ashbya gossypii</name>
    <dbReference type="NCBI Taxonomy" id="284811"/>
    <lineage>
        <taxon>Eukaryota</taxon>
        <taxon>Fungi</taxon>
        <taxon>Dikarya</taxon>
        <taxon>Ascomycota</taxon>
        <taxon>Saccharomycotina</taxon>
        <taxon>Saccharomycetes</taxon>
        <taxon>Saccharomycetales</taxon>
        <taxon>Saccharomycetaceae</taxon>
        <taxon>Eremothecium</taxon>
    </lineage>
</organism>
<proteinExistence type="inferred from homology"/>
<gene>
    <name type="primary">ESF1</name>
    <name type="ordered locus">AER259W</name>
</gene>
<protein>
    <recommendedName>
        <fullName>Pre-rRNA-processing protein ESF1</fullName>
    </recommendedName>
    <alternativeName>
        <fullName>18S rRNA factor 1</fullName>
    </alternativeName>
</protein>